<comment type="function">
    <text evidence="1">Succinyl-CoA synthetase functions in the citric acid cycle (TCA), coupling the hydrolysis of succinyl-CoA to the synthesis of either ATP or GTP and thus represents the only step of substrate-level phosphorylation in the TCA. The beta subunit provides nucleotide specificity of the enzyme and binds the substrate succinate, while the binding sites for coenzyme A and phosphate are found in the alpha subunit.</text>
</comment>
<comment type="catalytic activity">
    <reaction evidence="1">
        <text>succinate + ATP + CoA = succinyl-CoA + ADP + phosphate</text>
        <dbReference type="Rhea" id="RHEA:17661"/>
        <dbReference type="ChEBI" id="CHEBI:30031"/>
        <dbReference type="ChEBI" id="CHEBI:30616"/>
        <dbReference type="ChEBI" id="CHEBI:43474"/>
        <dbReference type="ChEBI" id="CHEBI:57287"/>
        <dbReference type="ChEBI" id="CHEBI:57292"/>
        <dbReference type="ChEBI" id="CHEBI:456216"/>
        <dbReference type="EC" id="6.2.1.5"/>
    </reaction>
    <physiologicalReaction direction="right-to-left" evidence="1">
        <dbReference type="Rhea" id="RHEA:17663"/>
    </physiologicalReaction>
</comment>
<comment type="catalytic activity">
    <reaction evidence="1">
        <text>GTP + succinate + CoA = succinyl-CoA + GDP + phosphate</text>
        <dbReference type="Rhea" id="RHEA:22120"/>
        <dbReference type="ChEBI" id="CHEBI:30031"/>
        <dbReference type="ChEBI" id="CHEBI:37565"/>
        <dbReference type="ChEBI" id="CHEBI:43474"/>
        <dbReference type="ChEBI" id="CHEBI:57287"/>
        <dbReference type="ChEBI" id="CHEBI:57292"/>
        <dbReference type="ChEBI" id="CHEBI:58189"/>
    </reaction>
    <physiologicalReaction direction="right-to-left" evidence="1">
        <dbReference type="Rhea" id="RHEA:22122"/>
    </physiologicalReaction>
</comment>
<comment type="cofactor">
    <cofactor evidence="1">
        <name>Mg(2+)</name>
        <dbReference type="ChEBI" id="CHEBI:18420"/>
    </cofactor>
    <text evidence="1">Binds 1 Mg(2+) ion per subunit.</text>
</comment>
<comment type="pathway">
    <text evidence="1">Carbohydrate metabolism; tricarboxylic acid cycle; succinate from succinyl-CoA (ligase route): step 1/1.</text>
</comment>
<comment type="subunit">
    <text evidence="1">Heterotetramer of two alpha and two beta subunits.</text>
</comment>
<comment type="similarity">
    <text evidence="1">Belongs to the succinate/malate CoA ligase beta subunit family.</text>
</comment>
<accession>Q2K3F0</accession>
<organism>
    <name type="scientific">Rhizobium etli (strain ATCC 51251 / DSM 11541 / JCM 21823 / NBRC 15573 / CFN 42)</name>
    <dbReference type="NCBI Taxonomy" id="347834"/>
    <lineage>
        <taxon>Bacteria</taxon>
        <taxon>Pseudomonadati</taxon>
        <taxon>Pseudomonadota</taxon>
        <taxon>Alphaproteobacteria</taxon>
        <taxon>Hyphomicrobiales</taxon>
        <taxon>Rhizobiaceae</taxon>
        <taxon>Rhizobium/Agrobacterium group</taxon>
        <taxon>Rhizobium</taxon>
    </lineage>
</organism>
<sequence length="397" mass="41856">MNIHEYQAKALLKGYGAPVAEGVAILKAEEAEAAAKSLPGPLYVVKSQIHAGGRGKGKFKELSPEAKGGVRLAKSIEDVVANAKEMLGNTLVTAQTGEAGKQVNRLYIEDGADIDRELYCSLLVDRSVGKVAFVVSTEGGMDIEAVAHDTPEKIQTIAIDPETGVTAADVAKISAALKLEGAAAEDAKSLFPLLYRAFNEKDMSLLEINPLIVMKNGHLRVLDAKMSFDGNALFRHDDVRALRDETEEDAKEIEASKWDLAYVALDGNIGCMVNGAGLAMATMDIIKLYGKEPANFCDVGGGAGKEKVAAAFKIITADPKVEGILVNIFGGIMKCDVIAEGVIAAVKEVGLKVPLVVRLEGTNVELGKKILNESGLAITAADDLDDAAKKIVAAING</sequence>
<dbReference type="EC" id="6.2.1.5" evidence="1"/>
<dbReference type="EMBL" id="CP000133">
    <property type="protein sequence ID" value="ABC92636.1"/>
    <property type="molecule type" value="Genomic_DNA"/>
</dbReference>
<dbReference type="RefSeq" id="WP_011427085.1">
    <property type="nucleotide sequence ID" value="NC_007761.1"/>
</dbReference>
<dbReference type="SMR" id="Q2K3F0"/>
<dbReference type="KEGG" id="ret:RHE_CH03890"/>
<dbReference type="eggNOG" id="COG0045">
    <property type="taxonomic scope" value="Bacteria"/>
</dbReference>
<dbReference type="HOGENOM" id="CLU_037430_0_2_5"/>
<dbReference type="OrthoDB" id="9802602at2"/>
<dbReference type="UniPathway" id="UPA00223">
    <property type="reaction ID" value="UER00999"/>
</dbReference>
<dbReference type="Proteomes" id="UP000001936">
    <property type="component" value="Chromosome"/>
</dbReference>
<dbReference type="GO" id="GO:0005829">
    <property type="term" value="C:cytosol"/>
    <property type="evidence" value="ECO:0007669"/>
    <property type="project" value="TreeGrafter"/>
</dbReference>
<dbReference type="GO" id="GO:0042709">
    <property type="term" value="C:succinate-CoA ligase complex"/>
    <property type="evidence" value="ECO:0007669"/>
    <property type="project" value="TreeGrafter"/>
</dbReference>
<dbReference type="GO" id="GO:0005524">
    <property type="term" value="F:ATP binding"/>
    <property type="evidence" value="ECO:0007669"/>
    <property type="project" value="UniProtKB-UniRule"/>
</dbReference>
<dbReference type="GO" id="GO:0000287">
    <property type="term" value="F:magnesium ion binding"/>
    <property type="evidence" value="ECO:0007669"/>
    <property type="project" value="UniProtKB-UniRule"/>
</dbReference>
<dbReference type="GO" id="GO:0004775">
    <property type="term" value="F:succinate-CoA ligase (ADP-forming) activity"/>
    <property type="evidence" value="ECO:0007669"/>
    <property type="project" value="UniProtKB-UniRule"/>
</dbReference>
<dbReference type="GO" id="GO:0004776">
    <property type="term" value="F:succinate-CoA ligase (GDP-forming) activity"/>
    <property type="evidence" value="ECO:0007669"/>
    <property type="project" value="RHEA"/>
</dbReference>
<dbReference type="GO" id="GO:0006104">
    <property type="term" value="P:succinyl-CoA metabolic process"/>
    <property type="evidence" value="ECO:0007669"/>
    <property type="project" value="TreeGrafter"/>
</dbReference>
<dbReference type="GO" id="GO:0006099">
    <property type="term" value="P:tricarboxylic acid cycle"/>
    <property type="evidence" value="ECO:0007669"/>
    <property type="project" value="UniProtKB-UniRule"/>
</dbReference>
<dbReference type="FunFam" id="3.30.1490.20:FF:000002">
    <property type="entry name" value="Succinate--CoA ligase [ADP-forming] subunit beta"/>
    <property type="match status" value="1"/>
</dbReference>
<dbReference type="FunFam" id="3.30.470.20:FF:000002">
    <property type="entry name" value="Succinate--CoA ligase [ADP-forming] subunit beta"/>
    <property type="match status" value="1"/>
</dbReference>
<dbReference type="FunFam" id="3.40.50.261:FF:000001">
    <property type="entry name" value="Succinate--CoA ligase [ADP-forming] subunit beta"/>
    <property type="match status" value="1"/>
</dbReference>
<dbReference type="Gene3D" id="3.30.1490.20">
    <property type="entry name" value="ATP-grasp fold, A domain"/>
    <property type="match status" value="1"/>
</dbReference>
<dbReference type="Gene3D" id="3.30.470.20">
    <property type="entry name" value="ATP-grasp fold, B domain"/>
    <property type="match status" value="1"/>
</dbReference>
<dbReference type="Gene3D" id="3.40.50.261">
    <property type="entry name" value="Succinyl-CoA synthetase domains"/>
    <property type="match status" value="1"/>
</dbReference>
<dbReference type="HAMAP" id="MF_00558">
    <property type="entry name" value="Succ_CoA_beta"/>
    <property type="match status" value="1"/>
</dbReference>
<dbReference type="InterPro" id="IPR011761">
    <property type="entry name" value="ATP-grasp"/>
</dbReference>
<dbReference type="InterPro" id="IPR013650">
    <property type="entry name" value="ATP-grasp_succ-CoA_synth-type"/>
</dbReference>
<dbReference type="InterPro" id="IPR013815">
    <property type="entry name" value="ATP_grasp_subdomain_1"/>
</dbReference>
<dbReference type="InterPro" id="IPR017866">
    <property type="entry name" value="Succ-CoA_synthase_bsu_CS"/>
</dbReference>
<dbReference type="InterPro" id="IPR005811">
    <property type="entry name" value="SUCC_ACL_C"/>
</dbReference>
<dbReference type="InterPro" id="IPR005809">
    <property type="entry name" value="Succ_CoA_ligase-like_bsu"/>
</dbReference>
<dbReference type="InterPro" id="IPR016102">
    <property type="entry name" value="Succinyl-CoA_synth-like"/>
</dbReference>
<dbReference type="NCBIfam" id="NF001913">
    <property type="entry name" value="PRK00696.1"/>
    <property type="match status" value="1"/>
</dbReference>
<dbReference type="NCBIfam" id="TIGR01016">
    <property type="entry name" value="sucCoAbeta"/>
    <property type="match status" value="1"/>
</dbReference>
<dbReference type="PANTHER" id="PTHR11815:SF10">
    <property type="entry name" value="SUCCINATE--COA LIGASE [GDP-FORMING] SUBUNIT BETA, MITOCHONDRIAL"/>
    <property type="match status" value="1"/>
</dbReference>
<dbReference type="PANTHER" id="PTHR11815">
    <property type="entry name" value="SUCCINYL-COA SYNTHETASE BETA CHAIN"/>
    <property type="match status" value="1"/>
</dbReference>
<dbReference type="Pfam" id="PF08442">
    <property type="entry name" value="ATP-grasp_2"/>
    <property type="match status" value="1"/>
</dbReference>
<dbReference type="Pfam" id="PF00549">
    <property type="entry name" value="Ligase_CoA"/>
    <property type="match status" value="1"/>
</dbReference>
<dbReference type="PIRSF" id="PIRSF001554">
    <property type="entry name" value="SucCS_beta"/>
    <property type="match status" value="1"/>
</dbReference>
<dbReference type="SUPFAM" id="SSF56059">
    <property type="entry name" value="Glutathione synthetase ATP-binding domain-like"/>
    <property type="match status" value="1"/>
</dbReference>
<dbReference type="SUPFAM" id="SSF52210">
    <property type="entry name" value="Succinyl-CoA synthetase domains"/>
    <property type="match status" value="1"/>
</dbReference>
<dbReference type="PROSITE" id="PS50975">
    <property type="entry name" value="ATP_GRASP"/>
    <property type="match status" value="1"/>
</dbReference>
<dbReference type="PROSITE" id="PS01217">
    <property type="entry name" value="SUCCINYL_COA_LIG_3"/>
    <property type="match status" value="1"/>
</dbReference>
<keyword id="KW-0067">ATP-binding</keyword>
<keyword id="KW-0436">Ligase</keyword>
<keyword id="KW-0460">Magnesium</keyword>
<keyword id="KW-0479">Metal-binding</keyword>
<keyword id="KW-0547">Nucleotide-binding</keyword>
<keyword id="KW-1185">Reference proteome</keyword>
<keyword id="KW-0816">Tricarboxylic acid cycle</keyword>
<reference key="1">
    <citation type="journal article" date="2006" name="Proc. Natl. Acad. Sci. U.S.A.">
        <title>The partitioned Rhizobium etli genome: genetic and metabolic redundancy in seven interacting replicons.</title>
        <authorList>
            <person name="Gonzalez V."/>
            <person name="Santamaria R.I."/>
            <person name="Bustos P."/>
            <person name="Hernandez-Gonzalez I."/>
            <person name="Medrano-Soto A."/>
            <person name="Moreno-Hagelsieb G."/>
            <person name="Janga S.C."/>
            <person name="Ramirez M.A."/>
            <person name="Jimenez-Jacinto V."/>
            <person name="Collado-Vides J."/>
            <person name="Davila G."/>
        </authorList>
    </citation>
    <scope>NUCLEOTIDE SEQUENCE [LARGE SCALE GENOMIC DNA]</scope>
    <source>
        <strain>ATCC 51251 / DSM 11541 / JCM 21823 / NBRC 15573 / CFN 42</strain>
    </source>
</reference>
<gene>
    <name evidence="1" type="primary">sucC</name>
    <name type="ordered locus">RHE_CH03890</name>
</gene>
<protein>
    <recommendedName>
        <fullName evidence="1">Succinate--CoA ligase [ADP-forming] subunit beta</fullName>
        <ecNumber evidence="1">6.2.1.5</ecNumber>
    </recommendedName>
    <alternativeName>
        <fullName evidence="1">Succinyl-CoA synthetase subunit beta</fullName>
        <shortName evidence="1">SCS-beta</shortName>
    </alternativeName>
</protein>
<evidence type="ECO:0000255" key="1">
    <source>
        <dbReference type="HAMAP-Rule" id="MF_00558"/>
    </source>
</evidence>
<name>SUCC_RHIEC</name>
<proteinExistence type="inferred from homology"/>
<feature type="chain" id="PRO_1000082186" description="Succinate--CoA ligase [ADP-forming] subunit beta">
    <location>
        <begin position="1"/>
        <end position="397"/>
    </location>
</feature>
<feature type="domain" description="ATP-grasp" evidence="1">
    <location>
        <begin position="9"/>
        <end position="254"/>
    </location>
</feature>
<feature type="binding site" evidence="1">
    <location>
        <position position="46"/>
    </location>
    <ligand>
        <name>ATP</name>
        <dbReference type="ChEBI" id="CHEBI:30616"/>
    </ligand>
</feature>
<feature type="binding site" evidence="1">
    <location>
        <begin position="53"/>
        <end position="55"/>
    </location>
    <ligand>
        <name>ATP</name>
        <dbReference type="ChEBI" id="CHEBI:30616"/>
    </ligand>
</feature>
<feature type="binding site" evidence="1">
    <location>
        <position position="109"/>
    </location>
    <ligand>
        <name>ATP</name>
        <dbReference type="ChEBI" id="CHEBI:30616"/>
    </ligand>
</feature>
<feature type="binding site" evidence="1">
    <location>
        <position position="112"/>
    </location>
    <ligand>
        <name>ATP</name>
        <dbReference type="ChEBI" id="CHEBI:30616"/>
    </ligand>
</feature>
<feature type="binding site" evidence="1">
    <location>
        <position position="117"/>
    </location>
    <ligand>
        <name>ATP</name>
        <dbReference type="ChEBI" id="CHEBI:30616"/>
    </ligand>
</feature>
<feature type="binding site" evidence="1">
    <location>
        <position position="209"/>
    </location>
    <ligand>
        <name>Mg(2+)</name>
        <dbReference type="ChEBI" id="CHEBI:18420"/>
    </ligand>
</feature>
<feature type="binding site" evidence="1">
    <location>
        <position position="223"/>
    </location>
    <ligand>
        <name>Mg(2+)</name>
        <dbReference type="ChEBI" id="CHEBI:18420"/>
    </ligand>
</feature>
<feature type="binding site" evidence="1">
    <location>
        <position position="274"/>
    </location>
    <ligand>
        <name>substrate</name>
        <note>ligand shared with subunit alpha</note>
    </ligand>
</feature>
<feature type="binding site" evidence="1">
    <location>
        <begin position="331"/>
        <end position="333"/>
    </location>
    <ligand>
        <name>substrate</name>
        <note>ligand shared with subunit alpha</note>
    </ligand>
</feature>